<feature type="chain" id="PRO_0000373882" description="Chromatin assembly factor 1 subunit A">
    <location>
        <begin position="1"/>
        <end position="937"/>
    </location>
</feature>
<feature type="region of interest" description="Disordered" evidence="3">
    <location>
        <begin position="21"/>
        <end position="69"/>
    </location>
</feature>
<feature type="region of interest" description="Disordered" evidence="3">
    <location>
        <begin position="250"/>
        <end position="386"/>
    </location>
</feature>
<feature type="region of interest" description="Disordered" evidence="3">
    <location>
        <begin position="574"/>
        <end position="614"/>
    </location>
</feature>
<feature type="region of interest" description="Disordered" evidence="3">
    <location>
        <begin position="753"/>
        <end position="778"/>
    </location>
</feature>
<feature type="region of interest" description="Disordered" evidence="3">
    <location>
        <begin position="831"/>
        <end position="851"/>
    </location>
</feature>
<feature type="region of interest" description="Disordered" evidence="3">
    <location>
        <begin position="910"/>
        <end position="937"/>
    </location>
</feature>
<feature type="short sequence motif" description="PxVxL motif" evidence="1">
    <location>
        <begin position="213"/>
        <end position="226"/>
    </location>
</feature>
<feature type="compositionally biased region" description="Basic and acidic residues" evidence="3">
    <location>
        <begin position="31"/>
        <end position="43"/>
    </location>
</feature>
<feature type="compositionally biased region" description="Polar residues" evidence="3">
    <location>
        <begin position="59"/>
        <end position="69"/>
    </location>
</feature>
<feature type="compositionally biased region" description="Low complexity" evidence="3">
    <location>
        <begin position="255"/>
        <end position="269"/>
    </location>
</feature>
<feature type="compositionally biased region" description="Basic and acidic residues" evidence="3">
    <location>
        <begin position="301"/>
        <end position="386"/>
    </location>
</feature>
<feature type="compositionally biased region" description="Acidic residues" evidence="3">
    <location>
        <begin position="574"/>
        <end position="586"/>
    </location>
</feature>
<feature type="compositionally biased region" description="Acidic residues" evidence="3">
    <location>
        <begin position="594"/>
        <end position="608"/>
    </location>
</feature>
<feature type="compositionally biased region" description="Polar residues" evidence="3">
    <location>
        <begin position="756"/>
        <end position="766"/>
    </location>
</feature>
<feature type="sequence conflict" description="In Ref. 2; CAG31858." evidence="5" ref="2">
    <original>L</original>
    <variation>S</variation>
    <location>
        <position position="62"/>
    </location>
</feature>
<feature type="sequence conflict" description="In Ref. 2; CAG31858." evidence="5" ref="2">
    <original>Q</original>
    <variation>R</variation>
    <location>
        <position position="97"/>
    </location>
</feature>
<feature type="sequence conflict" description="In Ref. 2; CAG31858." evidence="5" ref="2">
    <original>M</original>
    <variation>T</variation>
    <location>
        <position position="148"/>
    </location>
</feature>
<feature type="sequence conflict" description="In Ref. 2; CAG31858." evidence="5" ref="2">
    <original>V</original>
    <variation>I</variation>
    <location>
        <position position="247"/>
    </location>
</feature>
<feature type="sequence conflict" description="In Ref. 2; CAG31858." evidence="5" ref="2">
    <original>I</original>
    <variation>V</variation>
    <location>
        <position position="611"/>
    </location>
</feature>
<feature type="sequence conflict" description="In Ref. 2; CAG31858." evidence="5" ref="2">
    <original>V</original>
    <variation>I</variation>
    <location>
        <position position="842"/>
    </location>
</feature>
<feature type="sequence conflict" description="In Ref. 2; CAG31858." evidence="5" ref="2">
    <original>S</original>
    <variation>C</variation>
    <location>
        <position position="856"/>
    </location>
</feature>
<feature type="sequence conflict" description="In Ref. 2; CAG31858." evidence="5" ref="2">
    <original>T</original>
    <variation>A</variation>
    <location>
        <position position="914"/>
    </location>
</feature>
<feature type="sequence conflict" description="In Ref. 2; CAG31858." evidence="5" ref="2">
    <original>R</original>
    <variation>S</variation>
    <location>
        <position position="919"/>
    </location>
</feature>
<name>CAF1A_CHICK</name>
<organism>
    <name type="scientific">Gallus gallus</name>
    <name type="common">Chicken</name>
    <dbReference type="NCBI Taxonomy" id="9031"/>
    <lineage>
        <taxon>Eukaryota</taxon>
        <taxon>Metazoa</taxon>
        <taxon>Chordata</taxon>
        <taxon>Craniata</taxon>
        <taxon>Vertebrata</taxon>
        <taxon>Euteleostomi</taxon>
        <taxon>Archelosauria</taxon>
        <taxon>Archosauria</taxon>
        <taxon>Dinosauria</taxon>
        <taxon>Saurischia</taxon>
        <taxon>Theropoda</taxon>
        <taxon>Coelurosauria</taxon>
        <taxon>Aves</taxon>
        <taxon>Neognathae</taxon>
        <taxon>Galloanserae</taxon>
        <taxon>Galliformes</taxon>
        <taxon>Phasianidae</taxon>
        <taxon>Phasianinae</taxon>
        <taxon>Gallus</taxon>
    </lineage>
</organism>
<comment type="function">
    <text evidence="4">Acts as a component of the histone chaperone complex chromatin assembly factor 1 (CAF-1), which assembles histone octamers onto DNA during replication and repair (PubMed:17065558). CAF-1 performs the first step of the nucleosome assembly process, bringing newly synthesized histones H3 and H4 to replicating DNA; histones H2A/H2B can bind to this chromatin precursor subsequent to DNA replication to complete the histone octamer (PubMed:17065558).</text>
</comment>
<comment type="subunit">
    <text evidence="4">Subunit of the CAF-1 complex that contains RBBP4, CHAF1B and CHAF1A. Interacts with CHAF1B, PCNA and RBBP4 (PubMed:17065558).</text>
</comment>
<comment type="subcellular location">
    <subcellularLocation>
        <location evidence="2">Nucleus</location>
    </subcellularLocation>
    <text evidence="2">DNA replication foci.</text>
</comment>
<comment type="domain">
    <text>Contains one Pro-Xaa-Val-Xaa-Leu (PxVxL) motif, which is required for interaction with chromoshadow domains.</text>
</comment>
<comment type="disruption phenotype">
    <text evidence="4">Cells lacking CHAF1A show delayed S-phase progression with retarded DNA synthesis and defects in a rapid nucleosome formation of newly replicated DNA.</text>
</comment>
<comment type="similarity">
    <text evidence="5">Belongs to the CHAF1A family.</text>
</comment>
<comment type="sequence caution" evidence="5">
    <conflict type="erroneous initiation">
        <sequence resource="EMBL-CDS" id="CAG31858"/>
    </conflict>
    <text>Truncated N-terminus.</text>
</comment>
<comment type="sequence caution" evidence="5">
    <conflict type="frameshift">
        <sequence resource="EMBL-CDS" id="CAG31858"/>
    </conflict>
</comment>
<sequence length="937" mass="105133">MAAMECRDKAVVPPRRLVQARLPFKRLNPVPKEKHDAEAEGKKGKCSKSGLGQSKDSSTDTLHASTDNMENDCQLNSDVNFVPKLVNGKGPLDHFIQKSTKDNTDEIIVIIDSVDESNQRLSDDVDHVSFDSKASSAALTNGMLGKDMNKLSCLNSTQNSQTDDSMQTDVPCEAIANKGEDLVDGIQSCSGLTERNNLENTKVNQSELKDVIFEGKMPVVLLEDIMAAKSPQVTSLDGSVTSENETVELSHEGDSVLTNSSLSSLSVSSPEAQPVAETKRNTSPLAVSTPVRKVSQKLHKSSAEKEKLRLQRDQERADKLQKLQAEREEKGRLKEEAKAAKERAKEEAKKKKEEEKELKERERREKKEKEEKEKAEKLRVKEEKRKERQEALEAKLEEKRKKEEEKRLKEEEKRINAQKAEITRFFQKPKTPQAPKILAGSCGKFAPFEIKENMVLAPLCRIALYPDFLEQLDRLLRAQNSEVSFLRDLKCRKPRKTGPTFVNSSTDTVNSDVVVVDNCKTDAVPERGKFGRMKLLQFCENHRPAYWGTWNKKTTMIRPRNPWSKDSKLLDYEVDSDEEWEEEEPGESLSHSEGDDEEEGEDEDDDDGFFIPHGYLSEDEGVTEECDPENQKVRQKLKAKEWDELMAKGKRLHVLQPVKIGCIWESAQNDSGTNADLKILQQFTACILDSSVAEEEQQIQKCSKKRAKDQQILGQLLPLLHGNVNGSKVIIQEFQECCRQGLFSDVTAATDCGDTSPVSPNTSRPQTPVGEDSGVPSKARLKRIISENSVYEKRPEYRMCWYVHSEVLKSFDQEHLPVPCQWNYITQVPSSGKEDGGSVPGVAPVQSTPVSVKRKSTGSMCITKFMKRPRDAEQAEAMEMDGFQADTEEDEDDDDCMIVDVQPCKDSTLTVTETAPESRGTTAAHQDASMVSPSNTV</sequence>
<proteinExistence type="evidence at protein level"/>
<keyword id="KW-0131">Cell cycle</keyword>
<keyword id="KW-0143">Chaperone</keyword>
<keyword id="KW-0156">Chromatin regulator</keyword>
<keyword id="KW-0227">DNA damage</keyword>
<keyword id="KW-0234">DNA repair</keyword>
<keyword id="KW-0235">DNA replication</keyword>
<keyword id="KW-0539">Nucleus</keyword>
<keyword id="KW-1185">Reference proteome</keyword>
<dbReference type="EMBL" id="AB195692">
    <property type="protein sequence ID" value="BAD72952.1"/>
    <property type="molecule type" value="mRNA"/>
</dbReference>
<dbReference type="EMBL" id="AJ720199">
    <property type="protein sequence ID" value="CAG31858.1"/>
    <property type="status" value="ALT_SEQ"/>
    <property type="molecule type" value="mRNA"/>
</dbReference>
<dbReference type="RefSeq" id="NP_001073220.2">
    <property type="nucleotide sequence ID" value="NM_001079752.2"/>
</dbReference>
<dbReference type="SMR" id="Q5R1T0"/>
<dbReference type="BioGRID" id="690937">
    <property type="interactions" value="3"/>
</dbReference>
<dbReference type="FunCoup" id="Q5R1T0">
    <property type="interactions" value="1306"/>
</dbReference>
<dbReference type="STRING" id="9031.ENSGALP00000060187"/>
<dbReference type="PaxDb" id="9031-ENSGALP00000001693"/>
<dbReference type="GeneID" id="770217"/>
<dbReference type="KEGG" id="gga:770217"/>
<dbReference type="CTD" id="10036"/>
<dbReference type="VEuPathDB" id="HostDB:geneid_770217"/>
<dbReference type="eggNOG" id="KOG4364">
    <property type="taxonomic scope" value="Eukaryota"/>
</dbReference>
<dbReference type="InParanoid" id="Q5R1T0"/>
<dbReference type="OrthoDB" id="79480at2759"/>
<dbReference type="PhylomeDB" id="Q5R1T0"/>
<dbReference type="PRO" id="PR:Q5R1T0"/>
<dbReference type="Proteomes" id="UP000000539">
    <property type="component" value="Unassembled WGS sequence"/>
</dbReference>
<dbReference type="GO" id="GO:0033186">
    <property type="term" value="C:CAF-1 complex"/>
    <property type="evidence" value="ECO:0000250"/>
    <property type="project" value="UniProtKB"/>
</dbReference>
<dbReference type="GO" id="GO:0005634">
    <property type="term" value="C:nucleus"/>
    <property type="evidence" value="ECO:0000318"/>
    <property type="project" value="GO_Central"/>
</dbReference>
<dbReference type="GO" id="GO:0006281">
    <property type="term" value="P:DNA repair"/>
    <property type="evidence" value="ECO:0007669"/>
    <property type="project" value="UniProtKB-KW"/>
</dbReference>
<dbReference type="GO" id="GO:0006260">
    <property type="term" value="P:DNA replication"/>
    <property type="evidence" value="ECO:0007669"/>
    <property type="project" value="UniProtKB-KW"/>
</dbReference>
<dbReference type="GO" id="GO:0006335">
    <property type="term" value="P:DNA replication-dependent chromatin assembly"/>
    <property type="evidence" value="ECO:0000250"/>
    <property type="project" value="UniProtKB"/>
</dbReference>
<dbReference type="GO" id="GO:0006334">
    <property type="term" value="P:nucleosome assembly"/>
    <property type="evidence" value="ECO:0000318"/>
    <property type="project" value="GO_Central"/>
</dbReference>
<dbReference type="InterPro" id="IPR021644">
    <property type="entry name" value="CAF-1_p150_acidic"/>
</dbReference>
<dbReference type="InterPro" id="IPR029105">
    <property type="entry name" value="CAF1-p150_C2"/>
</dbReference>
<dbReference type="InterPro" id="IPR029091">
    <property type="entry name" value="CAF1_p150_N"/>
</dbReference>
<dbReference type="InterPro" id="IPR022043">
    <property type="entry name" value="CAF1A_DD"/>
</dbReference>
<dbReference type="PANTHER" id="PTHR15272:SF0">
    <property type="entry name" value="CHROMATIN ASSEMBLY FACTOR 1 SUBUNIT A"/>
    <property type="match status" value="1"/>
</dbReference>
<dbReference type="PANTHER" id="PTHR15272">
    <property type="entry name" value="CHROMATIN ASSEMBLY FACTOR 1 SUBUNIT A CAF-1 SUBUNIT A"/>
    <property type="match status" value="1"/>
</dbReference>
<dbReference type="Pfam" id="PF15539">
    <property type="entry name" value="CAF1-p150_C2"/>
    <property type="match status" value="1"/>
</dbReference>
<dbReference type="Pfam" id="PF15557">
    <property type="entry name" value="CAF1-p150_N"/>
    <property type="match status" value="1"/>
</dbReference>
<dbReference type="Pfam" id="PF11600">
    <property type="entry name" value="CAF1A_acidic"/>
    <property type="match status" value="1"/>
</dbReference>
<dbReference type="Pfam" id="PF12253">
    <property type="entry name" value="CAF1A_dimeriz"/>
    <property type="match status" value="1"/>
</dbReference>
<evidence type="ECO:0000250" key="1"/>
<evidence type="ECO:0000250" key="2">
    <source>
        <dbReference type="UniProtKB" id="Q13111"/>
    </source>
</evidence>
<evidence type="ECO:0000256" key="3">
    <source>
        <dbReference type="SAM" id="MobiDB-lite"/>
    </source>
</evidence>
<evidence type="ECO:0000269" key="4">
    <source>
    </source>
</evidence>
<evidence type="ECO:0000305" key="5"/>
<accession>Q5R1T0</accession>
<accession>Q5ZK85</accession>
<reference key="1">
    <citation type="journal article" date="2007" name="Mol. Biol. Cell">
        <title>Essential role of chromatin assembly factor-1-mediated rapid nucleosome assembly for DNA replication and cell division in vertebrate cells.</title>
        <authorList>
            <person name="Takami Y."/>
            <person name="Ono T."/>
            <person name="Fukagawa T."/>
            <person name="Shibahara K."/>
            <person name="Nakayama T."/>
        </authorList>
    </citation>
    <scope>NUCLEOTIDE SEQUENCE [MRNA]</scope>
    <scope>FUNCTION</scope>
    <scope>DISRUPTION PHENOTYPE</scope>
    <scope>INTERACTION WITH CHAF1B; PCNA AND RBBP4</scope>
    <source>
        <tissue>B-cell</tissue>
    </source>
</reference>
<reference key="2">
    <citation type="journal article" date="2005" name="Genome Biol.">
        <title>Full-length cDNAs from chicken bursal lymphocytes to facilitate gene function analysis.</title>
        <authorList>
            <person name="Caldwell R.B."/>
            <person name="Kierzek A.M."/>
            <person name="Arakawa H."/>
            <person name="Bezzubov Y."/>
            <person name="Zaim J."/>
            <person name="Fiedler P."/>
            <person name="Kutter S."/>
            <person name="Blagodatski A."/>
            <person name="Kostovska D."/>
            <person name="Koter M."/>
            <person name="Plachy J."/>
            <person name="Carninci P."/>
            <person name="Hayashizaki Y."/>
            <person name="Buerstedde J.-M."/>
        </authorList>
    </citation>
    <scope>NUCLEOTIDE SEQUENCE [LARGE SCALE MRNA]</scope>
    <source>
        <strain>CB</strain>
        <tissue>Bursa of Fabricius</tissue>
    </source>
</reference>
<gene>
    <name type="primary">CHAF1A</name>
    <name type="synonym">CAIP150</name>
    <name type="ORF">RCJMB04_12f19</name>
</gene>
<protein>
    <recommendedName>
        <fullName>Chromatin assembly factor 1 subunit A</fullName>
        <shortName>CAF-1 subunit A</shortName>
    </recommendedName>
    <alternativeName>
        <fullName>Chromatin assembly factor I p150 subunit</fullName>
        <shortName>CAF-I 150 kDa subunit</shortName>
        <shortName>CAF-I p150</shortName>
    </alternativeName>
</protein>